<name>SOX10_RAT</name>
<comment type="function">
    <text evidence="2 3 6">Transcription factor that plays a central role in developing and mature glia (By similarity). Specifically activates expression of myelin genes, during oligodendrocyte (OL) maturation, such as DUSP15 and MYRF, thereby playing a central role in oligodendrocyte maturation and CNS myelination (By similarity). Once induced, MYRF cooperates with SOX10 to implement the myelination program (By similarity). Transcriptional activator of MITF, acting synergistically with PAX3 (By similarity). Transcriptional activator of MBP, via binding to the gene promoter (PubMed:26525805).</text>
</comment>
<comment type="subunit">
    <text evidence="2 3">Monomer. Interacts with Armcx3 at the mitochondrial outer membrane surface. Interacts with PAX3 (By similarity).</text>
</comment>
<comment type="interaction">
    <interactant intactId="EBI-1185693">
        <id>O55170</id>
    </interactant>
    <interactant intactId="EBI-372942">
        <id>Q13287</id>
        <label>NMI</label>
    </interactant>
    <organismsDiffer>true</organismsDiffer>
    <experiments>4</experiments>
</comment>
<comment type="subcellular location">
    <subcellularLocation>
        <location evidence="3">Cytoplasm</location>
    </subcellularLocation>
    <subcellularLocation>
        <location evidence="7">Nucleus</location>
    </subcellularLocation>
    <subcellularLocation>
        <location evidence="3">Mitochondrion outer membrane</location>
        <topology evidence="3">Peripheral membrane protein</topology>
        <orientation evidence="3">Cytoplasmic side</orientation>
    </subcellularLocation>
</comment>
<comment type="tissue specificity">
    <text evidence="7">Predominant expression in glial cells of the nervous system.</text>
</comment>
<comment type="domain">
    <text evidence="1">The transactivation domains TAM and TAC (for transactivation domain in the middle and at the C-terminus, respectively) are required to contact transcriptional coactivators and basal transcriptional machinery components and thereby induce gene transactivation.</text>
</comment>
<evidence type="ECO:0000250" key="1">
    <source>
        <dbReference type="UniProtKB" id="P48436"/>
    </source>
</evidence>
<evidence type="ECO:0000250" key="2">
    <source>
        <dbReference type="UniProtKB" id="P56693"/>
    </source>
</evidence>
<evidence type="ECO:0000250" key="3">
    <source>
        <dbReference type="UniProtKB" id="Q04888"/>
    </source>
</evidence>
<evidence type="ECO:0000255" key="4">
    <source>
        <dbReference type="PROSITE-ProRule" id="PRU00267"/>
    </source>
</evidence>
<evidence type="ECO:0000256" key="5">
    <source>
        <dbReference type="SAM" id="MobiDB-lite"/>
    </source>
</evidence>
<evidence type="ECO:0000269" key="6">
    <source>
    </source>
</evidence>
<evidence type="ECO:0000269" key="7">
    <source>
    </source>
</evidence>
<dbReference type="EMBL" id="AJ001029">
    <property type="protein sequence ID" value="CAA04485.1"/>
    <property type="molecule type" value="mRNA"/>
</dbReference>
<dbReference type="EMBL" id="BC062067">
    <property type="protein sequence ID" value="AAH62067.1"/>
    <property type="molecule type" value="mRNA"/>
</dbReference>
<dbReference type="RefSeq" id="NP_062066.1">
    <property type="nucleotide sequence ID" value="NM_019193.3"/>
</dbReference>
<dbReference type="RefSeq" id="XP_017450187.1">
    <property type="nucleotide sequence ID" value="XM_017594698.1"/>
</dbReference>
<dbReference type="SMR" id="O55170"/>
<dbReference type="BioGRID" id="248015">
    <property type="interactions" value="20"/>
</dbReference>
<dbReference type="FunCoup" id="O55170">
    <property type="interactions" value="68"/>
</dbReference>
<dbReference type="IntAct" id="O55170">
    <property type="interactions" value="2"/>
</dbReference>
<dbReference type="MINT" id="O55170"/>
<dbReference type="STRING" id="10116.ENSRNOP00000015283"/>
<dbReference type="iPTMnet" id="O55170"/>
<dbReference type="PhosphoSitePlus" id="O55170"/>
<dbReference type="PaxDb" id="10116-ENSRNOP00000015283"/>
<dbReference type="Ensembl" id="ENSRNOT00000015283.4">
    <property type="protein sequence ID" value="ENSRNOP00000015283.3"/>
    <property type="gene ID" value="ENSRNOG00000011305.4"/>
</dbReference>
<dbReference type="GeneID" id="29361"/>
<dbReference type="KEGG" id="rno:29361"/>
<dbReference type="UCSC" id="RGD:3735">
    <property type="organism name" value="rat"/>
</dbReference>
<dbReference type="AGR" id="RGD:3735"/>
<dbReference type="CTD" id="6663"/>
<dbReference type="RGD" id="3735">
    <property type="gene designation" value="Sox10"/>
</dbReference>
<dbReference type="eggNOG" id="KOG0527">
    <property type="taxonomic scope" value="Eukaryota"/>
</dbReference>
<dbReference type="GeneTree" id="ENSGT00940000158046"/>
<dbReference type="HOGENOM" id="CLU_031800_0_0_1"/>
<dbReference type="InParanoid" id="O55170"/>
<dbReference type="OMA" id="ATIQAHY"/>
<dbReference type="OrthoDB" id="6247875at2759"/>
<dbReference type="PhylomeDB" id="O55170"/>
<dbReference type="Reactome" id="R-RNO-9856649">
    <property type="pathway name" value="Transcriptional and post-translational regulation of MITF-M expression and activity"/>
</dbReference>
<dbReference type="PRO" id="PR:O55170"/>
<dbReference type="Proteomes" id="UP000002494">
    <property type="component" value="Chromosome 7"/>
</dbReference>
<dbReference type="Bgee" id="ENSRNOG00000011305">
    <property type="expression patterns" value="Expressed in cerebellum and 11 other cell types or tissues"/>
</dbReference>
<dbReference type="GO" id="GO:0000785">
    <property type="term" value="C:chromatin"/>
    <property type="evidence" value="ECO:0000314"/>
    <property type="project" value="RGD"/>
</dbReference>
<dbReference type="GO" id="GO:0005737">
    <property type="term" value="C:cytoplasm"/>
    <property type="evidence" value="ECO:0000266"/>
    <property type="project" value="RGD"/>
</dbReference>
<dbReference type="GO" id="GO:0005741">
    <property type="term" value="C:mitochondrial outer membrane"/>
    <property type="evidence" value="ECO:0000266"/>
    <property type="project" value="RGD"/>
</dbReference>
<dbReference type="GO" id="GO:0005654">
    <property type="term" value="C:nucleoplasm"/>
    <property type="evidence" value="ECO:0000304"/>
    <property type="project" value="Reactome"/>
</dbReference>
<dbReference type="GO" id="GO:0005634">
    <property type="term" value="C:nucleus"/>
    <property type="evidence" value="ECO:0000250"/>
    <property type="project" value="UniProtKB"/>
</dbReference>
<dbReference type="GO" id="GO:0003682">
    <property type="term" value="F:chromatin binding"/>
    <property type="evidence" value="ECO:0000314"/>
    <property type="project" value="RGD"/>
</dbReference>
<dbReference type="GO" id="GO:0003677">
    <property type="term" value="F:DNA binding"/>
    <property type="evidence" value="ECO:0000314"/>
    <property type="project" value="RGD"/>
</dbReference>
<dbReference type="GO" id="GO:0001216">
    <property type="term" value="F:DNA-binding transcription activator activity"/>
    <property type="evidence" value="ECO:0000314"/>
    <property type="project" value="UniProtKB"/>
</dbReference>
<dbReference type="GO" id="GO:0003700">
    <property type="term" value="F:DNA-binding transcription factor activity"/>
    <property type="evidence" value="ECO:0000314"/>
    <property type="project" value="RGD"/>
</dbReference>
<dbReference type="GO" id="GO:0000981">
    <property type="term" value="F:DNA-binding transcription factor activity, RNA polymerase II-specific"/>
    <property type="evidence" value="ECO:0000266"/>
    <property type="project" value="RGD"/>
</dbReference>
<dbReference type="GO" id="GO:0140297">
    <property type="term" value="F:DNA-binding transcription factor binding"/>
    <property type="evidence" value="ECO:0000353"/>
    <property type="project" value="UniProtKB"/>
</dbReference>
<dbReference type="GO" id="GO:0042802">
    <property type="term" value="F:identical protein binding"/>
    <property type="evidence" value="ECO:0000266"/>
    <property type="project" value="RGD"/>
</dbReference>
<dbReference type="GO" id="GO:1990841">
    <property type="term" value="F:promoter-specific chromatin binding"/>
    <property type="evidence" value="ECO:0000315"/>
    <property type="project" value="RGD"/>
</dbReference>
<dbReference type="GO" id="GO:0000978">
    <property type="term" value="F:RNA polymerase II cis-regulatory region sequence-specific DNA binding"/>
    <property type="evidence" value="ECO:0000266"/>
    <property type="project" value="RGD"/>
</dbReference>
<dbReference type="GO" id="GO:1990837">
    <property type="term" value="F:sequence-specific double-stranded DNA binding"/>
    <property type="evidence" value="ECO:0000266"/>
    <property type="project" value="RGD"/>
</dbReference>
<dbReference type="GO" id="GO:0000976">
    <property type="term" value="F:transcription cis-regulatory region binding"/>
    <property type="evidence" value="ECO:0000314"/>
    <property type="project" value="UniProtKB"/>
</dbReference>
<dbReference type="GO" id="GO:0048468">
    <property type="term" value="P:cell development"/>
    <property type="evidence" value="ECO:0000303"/>
    <property type="project" value="RGD"/>
</dbReference>
<dbReference type="GO" id="GO:0030154">
    <property type="term" value="P:cell differentiation"/>
    <property type="evidence" value="ECO:0000266"/>
    <property type="project" value="RGD"/>
</dbReference>
<dbReference type="GO" id="GO:0048469">
    <property type="term" value="P:cell maturation"/>
    <property type="evidence" value="ECO:0000266"/>
    <property type="project" value="RGD"/>
</dbReference>
<dbReference type="GO" id="GO:0071393">
    <property type="term" value="P:cellular response to progesterone stimulus"/>
    <property type="evidence" value="ECO:0000270"/>
    <property type="project" value="RGD"/>
</dbReference>
<dbReference type="GO" id="GO:0071466">
    <property type="term" value="P:cellular response to xenobiotic stimulus"/>
    <property type="evidence" value="ECO:0000270"/>
    <property type="project" value="RGD"/>
</dbReference>
<dbReference type="GO" id="GO:0022010">
    <property type="term" value="P:central nervous system myelination"/>
    <property type="evidence" value="ECO:0000250"/>
    <property type="project" value="UniProtKB"/>
</dbReference>
<dbReference type="GO" id="GO:0048589">
    <property type="term" value="P:developmental growth"/>
    <property type="evidence" value="ECO:0000266"/>
    <property type="project" value="RGD"/>
</dbReference>
<dbReference type="GO" id="GO:0048546">
    <property type="term" value="P:digestive tract morphogenesis"/>
    <property type="evidence" value="ECO:0000266"/>
    <property type="project" value="RGD"/>
</dbReference>
<dbReference type="GO" id="GO:0048484">
    <property type="term" value="P:enteric nervous system development"/>
    <property type="evidence" value="ECO:0000266"/>
    <property type="project" value="RGD"/>
</dbReference>
<dbReference type="GO" id="GO:0001701">
    <property type="term" value="P:in utero embryonic development"/>
    <property type="evidence" value="ECO:0000266"/>
    <property type="project" value="RGD"/>
</dbReference>
<dbReference type="GO" id="GO:0032808">
    <property type="term" value="P:lacrimal gland development"/>
    <property type="evidence" value="ECO:0000266"/>
    <property type="project" value="RGD"/>
</dbReference>
<dbReference type="GO" id="GO:0030318">
    <property type="term" value="P:melanocyte differentiation"/>
    <property type="evidence" value="ECO:0000266"/>
    <property type="project" value="RGD"/>
</dbReference>
<dbReference type="GO" id="GO:0061138">
    <property type="term" value="P:morphogenesis of a branching epithelium"/>
    <property type="evidence" value="ECO:0000266"/>
    <property type="project" value="RGD"/>
</dbReference>
<dbReference type="GO" id="GO:0002009">
    <property type="term" value="P:morphogenesis of an epithelium"/>
    <property type="evidence" value="ECO:0000318"/>
    <property type="project" value="GO_Central"/>
</dbReference>
<dbReference type="GO" id="GO:0043066">
    <property type="term" value="P:negative regulation of apoptotic process"/>
    <property type="evidence" value="ECO:0000266"/>
    <property type="project" value="RGD"/>
</dbReference>
<dbReference type="GO" id="GO:0090090">
    <property type="term" value="P:negative regulation of canonical Wnt signaling pathway"/>
    <property type="evidence" value="ECO:0000266"/>
    <property type="project" value="RGD"/>
</dbReference>
<dbReference type="GO" id="GO:0045892">
    <property type="term" value="P:negative regulation of DNA-templated transcription"/>
    <property type="evidence" value="ECO:0000314"/>
    <property type="project" value="UniProtKB"/>
</dbReference>
<dbReference type="GO" id="GO:0010626">
    <property type="term" value="P:negative regulation of Schwann cell proliferation"/>
    <property type="evidence" value="ECO:0000315"/>
    <property type="project" value="RGD"/>
</dbReference>
<dbReference type="GO" id="GO:0000122">
    <property type="term" value="P:negative regulation of transcription by RNA polymerase II"/>
    <property type="evidence" value="ECO:0000318"/>
    <property type="project" value="GO_Central"/>
</dbReference>
<dbReference type="GO" id="GO:0001755">
    <property type="term" value="P:neural crest cell migration"/>
    <property type="evidence" value="ECO:0000266"/>
    <property type="project" value="RGD"/>
</dbReference>
<dbReference type="GO" id="GO:0007405">
    <property type="term" value="P:neuroblast proliferation"/>
    <property type="evidence" value="ECO:0000266"/>
    <property type="project" value="RGD"/>
</dbReference>
<dbReference type="GO" id="GO:0014003">
    <property type="term" value="P:oligodendrocyte development"/>
    <property type="evidence" value="ECO:0000250"/>
    <property type="project" value="UniProtKB"/>
</dbReference>
<dbReference type="GO" id="GO:0048709">
    <property type="term" value="P:oligodendrocyte differentiation"/>
    <property type="evidence" value="ECO:0000250"/>
    <property type="project" value="UniProtKB"/>
</dbReference>
<dbReference type="GO" id="GO:0007422">
    <property type="term" value="P:peripheral nervous system development"/>
    <property type="evidence" value="ECO:0000266"/>
    <property type="project" value="RGD"/>
</dbReference>
<dbReference type="GO" id="GO:0045893">
    <property type="term" value="P:positive regulation of DNA-templated transcription"/>
    <property type="evidence" value="ECO:0000314"/>
    <property type="project" value="UniProtKB"/>
</dbReference>
<dbReference type="GO" id="GO:0010628">
    <property type="term" value="P:positive regulation of gene expression"/>
    <property type="evidence" value="ECO:0000315"/>
    <property type="project" value="RGD"/>
</dbReference>
<dbReference type="GO" id="GO:0014015">
    <property type="term" value="P:positive regulation of gliogenesis"/>
    <property type="evidence" value="ECO:0000266"/>
    <property type="project" value="RGD"/>
</dbReference>
<dbReference type="GO" id="GO:0031643">
    <property type="term" value="P:positive regulation of myelination"/>
    <property type="evidence" value="ECO:0000315"/>
    <property type="project" value="RGD"/>
</dbReference>
<dbReference type="GO" id="GO:0002052">
    <property type="term" value="P:positive regulation of neuroblast proliferation"/>
    <property type="evidence" value="ECO:0000266"/>
    <property type="project" value="RGD"/>
</dbReference>
<dbReference type="GO" id="GO:0045944">
    <property type="term" value="P:positive regulation of transcription by RNA polymerase II"/>
    <property type="evidence" value="ECO:0000266"/>
    <property type="project" value="RGD"/>
</dbReference>
<dbReference type="GO" id="GO:0006355">
    <property type="term" value="P:regulation of DNA-templated transcription"/>
    <property type="evidence" value="ECO:0000314"/>
    <property type="project" value="RGD"/>
</dbReference>
<dbReference type="GO" id="GO:0048863">
    <property type="term" value="P:stem cell differentiation"/>
    <property type="evidence" value="ECO:0000270"/>
    <property type="project" value="RGD"/>
</dbReference>
<dbReference type="GO" id="GO:0006366">
    <property type="term" value="P:transcription by RNA polymerase II"/>
    <property type="evidence" value="ECO:0000266"/>
    <property type="project" value="RGD"/>
</dbReference>
<dbReference type="GO" id="GO:0006368">
    <property type="term" value="P:transcription elongation by RNA polymerase II"/>
    <property type="evidence" value="ECO:0000314"/>
    <property type="project" value="RGD"/>
</dbReference>
<dbReference type="CDD" id="cd22031">
    <property type="entry name" value="HMG-box_SoxE"/>
    <property type="match status" value="1"/>
</dbReference>
<dbReference type="FunFam" id="1.10.30.10:FF:000004">
    <property type="entry name" value="Transcription factor SOX-10"/>
    <property type="match status" value="1"/>
</dbReference>
<dbReference type="Gene3D" id="1.10.30.10">
    <property type="entry name" value="High mobility group box domain"/>
    <property type="match status" value="1"/>
</dbReference>
<dbReference type="InterPro" id="IPR009071">
    <property type="entry name" value="HMG_box_dom"/>
</dbReference>
<dbReference type="InterPro" id="IPR036910">
    <property type="entry name" value="HMG_box_dom_sf"/>
</dbReference>
<dbReference type="InterPro" id="IPR022151">
    <property type="entry name" value="Sox_N"/>
</dbReference>
<dbReference type="InterPro" id="IPR050917">
    <property type="entry name" value="SOX_TF"/>
</dbReference>
<dbReference type="PANTHER" id="PTHR45803">
    <property type="entry name" value="SOX100B"/>
    <property type="match status" value="1"/>
</dbReference>
<dbReference type="PANTHER" id="PTHR45803:SF6">
    <property type="entry name" value="TRANSCRIPTION FACTOR SOX-10"/>
    <property type="match status" value="1"/>
</dbReference>
<dbReference type="Pfam" id="PF00505">
    <property type="entry name" value="HMG_box"/>
    <property type="match status" value="1"/>
</dbReference>
<dbReference type="Pfam" id="PF12444">
    <property type="entry name" value="Sox_N"/>
    <property type="match status" value="1"/>
</dbReference>
<dbReference type="SMART" id="SM00398">
    <property type="entry name" value="HMG"/>
    <property type="match status" value="1"/>
</dbReference>
<dbReference type="SUPFAM" id="SSF47095">
    <property type="entry name" value="HMG-box"/>
    <property type="match status" value="1"/>
</dbReference>
<dbReference type="PROSITE" id="PS50118">
    <property type="entry name" value="HMG_BOX_2"/>
    <property type="match status" value="1"/>
</dbReference>
<reference key="1">
    <citation type="journal article" date="1998" name="J. Neurosci.">
        <title>Sox10, a novel transcriptional modulator in glial cells.</title>
        <authorList>
            <person name="Kuhlbrodt K."/>
            <person name="Herbarth B."/>
            <person name="Sock E."/>
            <person name="Hermans-Borgmeyer I."/>
            <person name="Wegner M."/>
        </authorList>
    </citation>
    <scope>NUCLEOTIDE SEQUENCE [MRNA]</scope>
    <scope>SUBCELLULAR LOCATION</scope>
    <scope>TISSUE SPECIFICITY</scope>
    <source>
        <strain>Sprague-Dawley</strain>
    </source>
</reference>
<reference key="2">
    <citation type="journal article" date="2004" name="Genome Res.">
        <title>The status, quality, and expansion of the NIH full-length cDNA project: the Mammalian Gene Collection (MGC).</title>
        <authorList>
            <consortium name="The MGC Project Team"/>
        </authorList>
    </citation>
    <scope>NUCLEOTIDE SEQUENCE [LARGE SCALE MRNA]</scope>
    <source>
        <tissue>Prostate</tissue>
    </source>
</reference>
<reference key="3">
    <citation type="journal article" date="2016" name="J. Neurochem.">
        <title>Sox13 functionally complements the related Sox5 and Sox6 as important developmental modulators in mouse spinal cord oligodendrocytes.</title>
        <authorList>
            <person name="Baroti T."/>
            <person name="Schillinger A."/>
            <person name="Wegner M."/>
            <person name="Stolt C.C."/>
        </authorList>
    </citation>
    <scope>FUNCTION</scope>
</reference>
<accession>O55170</accession>
<organism>
    <name type="scientific">Rattus norvegicus</name>
    <name type="common">Rat</name>
    <dbReference type="NCBI Taxonomy" id="10116"/>
    <lineage>
        <taxon>Eukaryota</taxon>
        <taxon>Metazoa</taxon>
        <taxon>Chordata</taxon>
        <taxon>Craniata</taxon>
        <taxon>Vertebrata</taxon>
        <taxon>Euteleostomi</taxon>
        <taxon>Mammalia</taxon>
        <taxon>Eutheria</taxon>
        <taxon>Euarchontoglires</taxon>
        <taxon>Glires</taxon>
        <taxon>Rodentia</taxon>
        <taxon>Myomorpha</taxon>
        <taxon>Muroidea</taxon>
        <taxon>Muridae</taxon>
        <taxon>Murinae</taxon>
        <taxon>Rattus</taxon>
    </lineage>
</organism>
<gene>
    <name type="primary">Sox10</name>
</gene>
<keyword id="KW-0010">Activator</keyword>
<keyword id="KW-0963">Cytoplasm</keyword>
<keyword id="KW-0238">DNA-binding</keyword>
<keyword id="KW-0472">Membrane</keyword>
<keyword id="KW-0496">Mitochondrion</keyword>
<keyword id="KW-1000">Mitochondrion outer membrane</keyword>
<keyword id="KW-0539">Nucleus</keyword>
<keyword id="KW-0597">Phosphoprotein</keyword>
<keyword id="KW-1185">Reference proteome</keyword>
<keyword id="KW-0804">Transcription</keyword>
<keyword id="KW-0805">Transcription regulation</keyword>
<proteinExistence type="evidence at protein level"/>
<protein>
    <recommendedName>
        <fullName>Transcription factor SOX-10</fullName>
    </recommendedName>
</protein>
<feature type="chain" id="PRO_0000048748" description="Transcription factor SOX-10">
    <location>
        <begin position="1"/>
        <end position="466"/>
    </location>
</feature>
<feature type="DNA-binding region" description="HMG box" evidence="4">
    <location>
        <begin position="104"/>
        <end position="172"/>
    </location>
</feature>
<feature type="region of interest" description="Disordered" evidence="5">
    <location>
        <begin position="1"/>
        <end position="67"/>
    </location>
</feature>
<feature type="region of interest" description="Dimerization (DIM)" evidence="2">
    <location>
        <begin position="62"/>
        <end position="102"/>
    </location>
</feature>
<feature type="region of interest" description="Disordered" evidence="5">
    <location>
        <begin position="160"/>
        <end position="198"/>
    </location>
</feature>
<feature type="region of interest" description="Disordered" evidence="5">
    <location>
        <begin position="213"/>
        <end position="275"/>
    </location>
</feature>
<feature type="region of interest" description="Transactivation domain (TAM)" evidence="2">
    <location>
        <begin position="228"/>
        <end position="310"/>
    </location>
</feature>
<feature type="region of interest" description="Transactivation domain (TAC)" evidence="2">
    <location>
        <begin position="353"/>
        <end position="466"/>
    </location>
</feature>
<feature type="region of interest" description="Disordered" evidence="5">
    <location>
        <begin position="355"/>
        <end position="375"/>
    </location>
</feature>
<feature type="region of interest" description="Disordered" evidence="5">
    <location>
        <begin position="433"/>
        <end position="466"/>
    </location>
</feature>
<feature type="compositionally biased region" description="Low complexity" evidence="5">
    <location>
        <begin position="23"/>
        <end position="32"/>
    </location>
</feature>
<feature type="compositionally biased region" description="Basic and acidic residues" evidence="5">
    <location>
        <begin position="160"/>
        <end position="173"/>
    </location>
</feature>
<feature type="compositionally biased region" description="Basic and acidic residues" evidence="5">
    <location>
        <begin position="254"/>
        <end position="271"/>
    </location>
</feature>
<feature type="compositionally biased region" description="Polar residues" evidence="5">
    <location>
        <begin position="440"/>
        <end position="466"/>
    </location>
</feature>
<feature type="modified residue" description="Phosphoserine" evidence="2">
    <location>
        <position position="24"/>
    </location>
</feature>
<sequence length="466" mass="50039">MAEEQDLSEVELSPVGSEEPRCLSPSSAPSLGPDGGGGGSGLRASPGPGELGKVKKEQQDGEADDDKFPVCIREAVSQVLSGYDWTLVPMPVRVNGASKSKPHVKRPMNAFMVWAQAARRKLADQYPHLHNAELSKTLGKLWRLLNESDKRPFIEEAERLRMQHKKDHPDYKYQPRRRKNGKAAQGEAECPGGETDQGGAAAIQAHYKSAHLDHRHPEEGSPMSDGNPEHPSGQSHGPPTPPTTPKTELQSGKADPKRDGRSLGEGGKPHIDFGNVDIGEISHEVMSNMETFDVTELDQYLPPNGHPGHVGSYSAAGYGLSSALAVASGHSAWISKPPGVALPTVSPPAVDAKAQVKTETTGPQGPPHYTDQPSTSQIAYTSLSLPHYGSAFPSISRPQFDYSDHQPSGPYYGHAGQASGLYSAFSYMGPSQRPLYTAISDPSPSGPQSHSPTHWEQPVYTTLSRP</sequence>